<organism>
    <name type="scientific">Homo sapiens</name>
    <name type="common">Human</name>
    <dbReference type="NCBI Taxonomy" id="9606"/>
    <lineage>
        <taxon>Eukaryota</taxon>
        <taxon>Metazoa</taxon>
        <taxon>Chordata</taxon>
        <taxon>Craniata</taxon>
        <taxon>Vertebrata</taxon>
        <taxon>Euteleostomi</taxon>
        <taxon>Mammalia</taxon>
        <taxon>Eutheria</taxon>
        <taxon>Euarchontoglires</taxon>
        <taxon>Primates</taxon>
        <taxon>Haplorrhini</taxon>
        <taxon>Catarrhini</taxon>
        <taxon>Hominidae</taxon>
        <taxon>Homo</taxon>
    </lineage>
</organism>
<keyword id="KW-0002">3D-structure</keyword>
<keyword id="KW-0025">Alternative splicing</keyword>
<keyword id="KW-0903">Direct protein sequencing</keyword>
<keyword id="KW-1015">Disulfide bond</keyword>
<keyword id="KW-0325">Glycoprotein</keyword>
<keyword id="KW-0378">Hydrolase</keyword>
<keyword id="KW-0645">Protease</keyword>
<keyword id="KW-1267">Proteomics identification</keyword>
<keyword id="KW-1185">Reference proteome</keyword>
<keyword id="KW-0964">Secreted</keyword>
<keyword id="KW-0720">Serine protease</keyword>
<keyword id="KW-0732">Signal</keyword>
<keyword id="KW-0865">Zymogen</keyword>
<comment type="function">
    <text evidence="6">May catalyze the degradation of intercellular cohesive structures in the cornified layer of the skin in the continuous shedding of cells from the skin surface. Specific for amino acid residues with aromatic side chains in the P1 position. Cleaves insulin A chain at '14-Tyr-|-Gln-15' and insulin B chain at '6-Leu-|-Cys-7', '16-Tyr-|-Leu-17', '25-Phe-|-Tyr-26' and '26-Tyr-|-Thr-27'. Could play a role in the activation of precursors to inflammatory cytokines.</text>
</comment>
<comment type="catalytic activity">
    <reaction>
        <text>Cleavage of proteins with aromatic side chains in the P1 position.</text>
        <dbReference type="EC" id="3.4.21.117"/>
    </reaction>
</comment>
<comment type="activity regulation">
    <text evidence="6">Inhibited by Zn2+ and Cu2+ at low micromolar concentrations. Inhibited by SERPINA12.</text>
</comment>
<comment type="subcellular location">
    <subcellularLocation>
        <location evidence="4">Secreted</location>
    </subcellularLocation>
    <text>In ovarian carcinoma, secreted and also observed at the apical membrane and in cytoplasm at the invasive front.</text>
</comment>
<comment type="alternative products">
    <event type="alternative splicing"/>
    <isoform>
        <id>P49862-1</id>
        <name>1</name>
        <name>Long</name>
        <sequence type="displayed"/>
    </isoform>
    <isoform>
        <id>P49862-2</id>
        <name>2</name>
        <name>Short</name>
        <sequence type="described" ref="VSP_013581"/>
    </isoform>
</comment>
<comment type="tissue specificity">
    <text evidence="3 4">Abundantly expressed in the skin and is expressed by keratinocytes in the epidermis. Also expressed in the brain, mammary gland, cerebellum, spinal cord and kidney. Lower levels in salivary glands, uterus, thymus, thyroid, placenta, trachea and testis. Up-regulated in ovarian carcinoma, especially late-stage serous carcinoma, compared with normal ovaries and benign adenomas (at protein level).</text>
</comment>
<comment type="induction">
    <text evidence="3">By estrogens and glucocorticoids in a breast carcinoma cell line.</text>
</comment>
<comment type="similarity">
    <text evidence="2">Belongs to the peptidase S1 family. Kallikrein subfamily.</text>
</comment>
<comment type="online information" name="Atlas of Genetics and Cytogenetics in Oncology and Haematology">
    <link uri="https://atlasgeneticsoncology.org/gene/41087/KLK7"/>
</comment>
<proteinExistence type="evidence at protein level"/>
<gene>
    <name type="primary">KLK7</name>
    <name type="synonym">PRSS6</name>
    <name type="synonym">SCCE</name>
</gene>
<dbReference type="EC" id="3.4.21.117"/>
<dbReference type="EMBL" id="L33404">
    <property type="protein sequence ID" value="AAC37551.1"/>
    <property type="molecule type" value="mRNA"/>
</dbReference>
<dbReference type="EMBL" id="AF166330">
    <property type="protein sequence ID" value="AAD49718.1"/>
    <property type="molecule type" value="Genomic_DNA"/>
</dbReference>
<dbReference type="EMBL" id="AF243527">
    <property type="protein sequence ID" value="AAG33360.1"/>
    <property type="molecule type" value="Genomic_DNA"/>
</dbReference>
<dbReference type="EMBL" id="AF332583">
    <property type="protein sequence ID" value="AAK69624.1"/>
    <property type="molecule type" value="Genomic_DNA"/>
</dbReference>
<dbReference type="EMBL" id="AF411214">
    <property type="protein sequence ID" value="AAN03662.1"/>
    <property type="molecule type" value="mRNA"/>
</dbReference>
<dbReference type="EMBL" id="AF411215">
    <property type="protein sequence ID" value="AAN03663.1"/>
    <property type="molecule type" value="mRNA"/>
</dbReference>
<dbReference type="EMBL" id="AY601109">
    <property type="protein sequence ID" value="AAU04540.1"/>
    <property type="molecule type" value="mRNA"/>
</dbReference>
<dbReference type="EMBL" id="AK289660">
    <property type="protein sequence ID" value="BAF82349.1"/>
    <property type="molecule type" value="mRNA"/>
</dbReference>
<dbReference type="EMBL" id="CH471135">
    <property type="protein sequence ID" value="EAW71959.1"/>
    <property type="molecule type" value="Genomic_DNA"/>
</dbReference>
<dbReference type="EMBL" id="BC032005">
    <property type="protein sequence ID" value="AAH32005.1"/>
    <property type="molecule type" value="mRNA"/>
</dbReference>
<dbReference type="CCDS" id="CCDS12812.1">
    <molecule id="P49862-1"/>
</dbReference>
<dbReference type="CCDS" id="CCDS59414.1">
    <molecule id="P49862-2"/>
</dbReference>
<dbReference type="PIR" id="A53968">
    <property type="entry name" value="A53968"/>
</dbReference>
<dbReference type="RefSeq" id="NP_001193982.1">
    <molecule id="P49862-2"/>
    <property type="nucleotide sequence ID" value="NM_001207053.2"/>
</dbReference>
<dbReference type="RefSeq" id="NP_001230055.1">
    <property type="nucleotide sequence ID" value="NM_001243126.1"/>
</dbReference>
<dbReference type="RefSeq" id="NP_005037.1">
    <molecule id="P49862-1"/>
    <property type="nucleotide sequence ID" value="NM_005046.4"/>
</dbReference>
<dbReference type="RefSeq" id="NP_644806.1">
    <molecule id="P49862-1"/>
    <property type="nucleotide sequence ID" value="NM_139277.2"/>
</dbReference>
<dbReference type="PDB" id="2QXG">
    <property type="method" value="X-ray"/>
    <property type="resolution" value="2.60 A"/>
    <property type="chains" value="A/B=30-253"/>
</dbReference>
<dbReference type="PDB" id="2QXH">
    <property type="method" value="X-ray"/>
    <property type="resolution" value="2.00 A"/>
    <property type="chains" value="A=30-253"/>
</dbReference>
<dbReference type="PDB" id="2QXI">
    <property type="method" value="X-ray"/>
    <property type="resolution" value="1.00 A"/>
    <property type="chains" value="A=30-253"/>
</dbReference>
<dbReference type="PDB" id="2QXJ">
    <property type="method" value="X-ray"/>
    <property type="resolution" value="2.10 A"/>
    <property type="chains" value="A=30-253"/>
</dbReference>
<dbReference type="PDB" id="3BSQ">
    <property type="method" value="X-ray"/>
    <property type="resolution" value="2.80 A"/>
    <property type="chains" value="A/B/C=30-250"/>
</dbReference>
<dbReference type="PDB" id="5FAH">
    <property type="method" value="X-ray"/>
    <property type="resolution" value="1.10 A"/>
    <property type="chains" value="A=30-253"/>
</dbReference>
<dbReference type="PDB" id="5Y9L">
    <property type="method" value="X-ray"/>
    <property type="resolution" value="2.15 A"/>
    <property type="chains" value="A=30-253"/>
</dbReference>
<dbReference type="PDB" id="5YJK">
    <property type="method" value="X-ray"/>
    <property type="resolution" value="2.40 A"/>
    <property type="chains" value="A=30-253"/>
</dbReference>
<dbReference type="PDB" id="6SHH">
    <property type="method" value="X-ray"/>
    <property type="resolution" value="2.00 A"/>
    <property type="chains" value="A/B/C/D/E/F/G/H=30-253"/>
</dbReference>
<dbReference type="PDB" id="6SHI">
    <property type="method" value="X-ray"/>
    <property type="resolution" value="1.85 A"/>
    <property type="chains" value="A/B/C/D/E/F/G/H=30-253"/>
</dbReference>
<dbReference type="PDB" id="6SJU">
    <property type="method" value="X-ray"/>
    <property type="resolution" value="1.97 A"/>
    <property type="chains" value="A/B/C/D/E/F/G/H=30-253"/>
</dbReference>
<dbReference type="PDB" id="6Y4S">
    <property type="method" value="X-ray"/>
    <property type="resolution" value="2.23 A"/>
    <property type="chains" value="A/B/C=30-253"/>
</dbReference>
<dbReference type="PDBsum" id="2QXG"/>
<dbReference type="PDBsum" id="2QXH"/>
<dbReference type="PDBsum" id="2QXI"/>
<dbReference type="PDBsum" id="2QXJ"/>
<dbReference type="PDBsum" id="3BSQ"/>
<dbReference type="PDBsum" id="5FAH"/>
<dbReference type="PDBsum" id="5Y9L"/>
<dbReference type="PDBsum" id="5YJK"/>
<dbReference type="PDBsum" id="6SHH"/>
<dbReference type="PDBsum" id="6SHI"/>
<dbReference type="PDBsum" id="6SJU"/>
<dbReference type="PDBsum" id="6Y4S"/>
<dbReference type="SMR" id="P49862"/>
<dbReference type="BioGRID" id="111631">
    <property type="interactions" value="104"/>
</dbReference>
<dbReference type="FunCoup" id="P49862">
    <property type="interactions" value="281"/>
</dbReference>
<dbReference type="IntAct" id="P49862">
    <property type="interactions" value="70"/>
</dbReference>
<dbReference type="MINT" id="P49862"/>
<dbReference type="STRING" id="9606.ENSP00000470538"/>
<dbReference type="BindingDB" id="P49862"/>
<dbReference type="ChEMBL" id="CHEMBL2443"/>
<dbReference type="DrugBank" id="DB08038">
    <property type="generic name" value="L-alanyl-N-[(1S,2R)-1-benzyl-2-hydroxypropyl]-L-alaninamide"/>
</dbReference>
<dbReference type="GuidetoPHARMACOLOGY" id="2377"/>
<dbReference type="MEROPS" id="S01.300"/>
<dbReference type="GlyCosmos" id="P49862">
    <property type="glycosylation" value="1 site, No reported glycans"/>
</dbReference>
<dbReference type="GlyGen" id="P49862">
    <property type="glycosylation" value="2 sites, 1 O-linked glycan (1 site)"/>
</dbReference>
<dbReference type="iPTMnet" id="P49862"/>
<dbReference type="PhosphoSitePlus" id="P49862"/>
<dbReference type="BioMuta" id="KLK7"/>
<dbReference type="DMDM" id="1710878"/>
<dbReference type="jPOST" id="P49862"/>
<dbReference type="MassIVE" id="P49862"/>
<dbReference type="PaxDb" id="9606-ENSP00000375683"/>
<dbReference type="PeptideAtlas" id="P49862"/>
<dbReference type="ProteomicsDB" id="56160">
    <molecule id="P49862-1"/>
</dbReference>
<dbReference type="ProteomicsDB" id="56161">
    <molecule id="P49862-2"/>
</dbReference>
<dbReference type="Pumba" id="P49862"/>
<dbReference type="Antibodypedia" id="18939">
    <property type="antibodies" value="421 antibodies from 33 providers"/>
</dbReference>
<dbReference type="DNASU" id="5650"/>
<dbReference type="Ensembl" id="ENST00000391807.5">
    <molecule id="P49862-1"/>
    <property type="protein sequence ID" value="ENSP00000375683.1"/>
    <property type="gene ID" value="ENSG00000169035.12"/>
</dbReference>
<dbReference type="Ensembl" id="ENST00000595820.6">
    <molecule id="P49862-1"/>
    <property type="protein sequence ID" value="ENSP00000470538.1"/>
    <property type="gene ID" value="ENSG00000169035.12"/>
</dbReference>
<dbReference type="Ensembl" id="ENST00000597707.5">
    <molecule id="P49862-2"/>
    <property type="protein sequence ID" value="ENSP00000469950.1"/>
    <property type="gene ID" value="ENSG00000169035.12"/>
</dbReference>
<dbReference type="GeneID" id="5650"/>
<dbReference type="KEGG" id="hsa:5650"/>
<dbReference type="MANE-Select" id="ENST00000595820.6">
    <property type="protein sequence ID" value="ENSP00000470538.1"/>
    <property type="RefSeq nucleotide sequence ID" value="NM_005046.4"/>
    <property type="RefSeq protein sequence ID" value="NP_005037.1"/>
</dbReference>
<dbReference type="UCSC" id="uc002puo.4">
    <molecule id="P49862-1"/>
    <property type="organism name" value="human"/>
</dbReference>
<dbReference type="AGR" id="HGNC:6368"/>
<dbReference type="CTD" id="5650"/>
<dbReference type="DisGeNET" id="5650"/>
<dbReference type="GeneCards" id="KLK7"/>
<dbReference type="HGNC" id="HGNC:6368">
    <property type="gene designation" value="KLK7"/>
</dbReference>
<dbReference type="HPA" id="ENSG00000169035">
    <property type="expression patterns" value="Group enriched (esophagus, skin)"/>
</dbReference>
<dbReference type="MIM" id="604438">
    <property type="type" value="gene"/>
</dbReference>
<dbReference type="neXtProt" id="NX_P49862"/>
<dbReference type="OpenTargets" id="ENSG00000169035"/>
<dbReference type="PharmGKB" id="PA30157"/>
<dbReference type="VEuPathDB" id="HostDB:ENSG00000169035"/>
<dbReference type="eggNOG" id="KOG3627">
    <property type="taxonomic scope" value="Eukaryota"/>
</dbReference>
<dbReference type="GeneTree" id="ENSGT01020000230389"/>
<dbReference type="HOGENOM" id="CLU_006842_1_1_1"/>
<dbReference type="InParanoid" id="P49862"/>
<dbReference type="OMA" id="QECSKVY"/>
<dbReference type="OrthoDB" id="10061449at2759"/>
<dbReference type="PAN-GO" id="P49862">
    <property type="GO annotations" value="2 GO annotations based on evolutionary models"/>
</dbReference>
<dbReference type="PhylomeDB" id="P49862"/>
<dbReference type="TreeFam" id="TF331065"/>
<dbReference type="BRENDA" id="3.4.21.117">
    <property type="organism ID" value="2681"/>
</dbReference>
<dbReference type="PathwayCommons" id="P49862"/>
<dbReference type="Reactome" id="R-HSA-1474228">
    <property type="pathway name" value="Degradation of the extracellular matrix"/>
</dbReference>
<dbReference type="Reactome" id="R-HSA-9725554">
    <property type="pathway name" value="Differentiation of Keratinocytes in Interfollicular Epidermis in Mammalian Skin"/>
</dbReference>
<dbReference type="SignaLink" id="P49862"/>
<dbReference type="BioGRID-ORCS" id="5650">
    <property type="hits" value="17 hits in 1143 CRISPR screens"/>
</dbReference>
<dbReference type="ChiTaRS" id="KLK7">
    <property type="organism name" value="human"/>
</dbReference>
<dbReference type="EvolutionaryTrace" id="P49862"/>
<dbReference type="GeneWiki" id="KLK7"/>
<dbReference type="GenomeRNAi" id="5650"/>
<dbReference type="Pharos" id="P49862">
    <property type="development level" value="Tchem"/>
</dbReference>
<dbReference type="PRO" id="PR:P49862"/>
<dbReference type="Proteomes" id="UP000005640">
    <property type="component" value="Chromosome 19"/>
</dbReference>
<dbReference type="RNAct" id="P49862">
    <property type="molecule type" value="protein"/>
</dbReference>
<dbReference type="Bgee" id="ENSG00000169035">
    <property type="expression patterns" value="Expressed in gingival epithelium and 151 other cell types or tissues"/>
</dbReference>
<dbReference type="ExpressionAtlas" id="P49862">
    <property type="expression patterns" value="baseline and differential"/>
</dbReference>
<dbReference type="GO" id="GO:0001533">
    <property type="term" value="C:cornified envelope"/>
    <property type="evidence" value="ECO:0007669"/>
    <property type="project" value="Ensembl"/>
</dbReference>
<dbReference type="GO" id="GO:0097209">
    <property type="term" value="C:epidermal lamellar body"/>
    <property type="evidence" value="ECO:0000314"/>
    <property type="project" value="UniProtKB"/>
</dbReference>
<dbReference type="GO" id="GO:0005576">
    <property type="term" value="C:extracellular region"/>
    <property type="evidence" value="ECO:0000304"/>
    <property type="project" value="Reactome"/>
</dbReference>
<dbReference type="GO" id="GO:0005615">
    <property type="term" value="C:extracellular space"/>
    <property type="evidence" value="ECO:0000315"/>
    <property type="project" value="UniProtKB"/>
</dbReference>
<dbReference type="GO" id="GO:0030141">
    <property type="term" value="C:secretory granule"/>
    <property type="evidence" value="ECO:0000318"/>
    <property type="project" value="GO_Central"/>
</dbReference>
<dbReference type="GO" id="GO:0004222">
    <property type="term" value="F:metalloendopeptidase activity"/>
    <property type="evidence" value="ECO:0000304"/>
    <property type="project" value="Reactome"/>
</dbReference>
<dbReference type="GO" id="GO:0008233">
    <property type="term" value="F:peptidase activity"/>
    <property type="evidence" value="ECO:0000315"/>
    <property type="project" value="UniProtKB"/>
</dbReference>
<dbReference type="GO" id="GO:0004252">
    <property type="term" value="F:serine-type endopeptidase activity"/>
    <property type="evidence" value="ECO:0000318"/>
    <property type="project" value="GO_Central"/>
</dbReference>
<dbReference type="GO" id="GO:0008236">
    <property type="term" value="F:serine-type peptidase activity"/>
    <property type="evidence" value="ECO:0000304"/>
    <property type="project" value="ProtInc"/>
</dbReference>
<dbReference type="GO" id="GO:0008544">
    <property type="term" value="P:epidermis development"/>
    <property type="evidence" value="ECO:0000304"/>
    <property type="project" value="ProtInc"/>
</dbReference>
<dbReference type="GO" id="GO:0022617">
    <property type="term" value="P:extracellular matrix disassembly"/>
    <property type="evidence" value="ECO:0000304"/>
    <property type="project" value="Reactome"/>
</dbReference>
<dbReference type="GO" id="GO:0002803">
    <property type="term" value="P:positive regulation of antibacterial peptide production"/>
    <property type="evidence" value="ECO:0000315"/>
    <property type="project" value="UniProtKB"/>
</dbReference>
<dbReference type="GO" id="GO:0051604">
    <property type="term" value="P:protein maturation"/>
    <property type="evidence" value="ECO:0000318"/>
    <property type="project" value="GO_Central"/>
</dbReference>
<dbReference type="GO" id="GO:0006508">
    <property type="term" value="P:proteolysis"/>
    <property type="evidence" value="ECO:0007669"/>
    <property type="project" value="UniProtKB-KW"/>
</dbReference>
<dbReference type="CDD" id="cd00190">
    <property type="entry name" value="Tryp_SPc"/>
    <property type="match status" value="1"/>
</dbReference>
<dbReference type="FunFam" id="2.40.10.10:FF:000021">
    <property type="entry name" value="Kallikrein 1"/>
    <property type="match status" value="1"/>
</dbReference>
<dbReference type="FunFam" id="2.40.10.10:FF:000010">
    <property type="entry name" value="Kallikrein related peptidase 11"/>
    <property type="match status" value="1"/>
</dbReference>
<dbReference type="Gene3D" id="2.40.10.10">
    <property type="entry name" value="Trypsin-like serine proteases"/>
    <property type="match status" value="2"/>
</dbReference>
<dbReference type="InterPro" id="IPR009003">
    <property type="entry name" value="Peptidase_S1_PA"/>
</dbReference>
<dbReference type="InterPro" id="IPR043504">
    <property type="entry name" value="Peptidase_S1_PA_chymotrypsin"/>
</dbReference>
<dbReference type="InterPro" id="IPR001314">
    <property type="entry name" value="Peptidase_S1A"/>
</dbReference>
<dbReference type="InterPro" id="IPR001254">
    <property type="entry name" value="Trypsin_dom"/>
</dbReference>
<dbReference type="InterPro" id="IPR018114">
    <property type="entry name" value="TRYPSIN_HIS"/>
</dbReference>
<dbReference type="InterPro" id="IPR033116">
    <property type="entry name" value="TRYPSIN_SER"/>
</dbReference>
<dbReference type="PANTHER" id="PTHR24271:SF45">
    <property type="entry name" value="KALLIKREIN-7"/>
    <property type="match status" value="1"/>
</dbReference>
<dbReference type="PANTHER" id="PTHR24271">
    <property type="entry name" value="KALLIKREIN-RELATED"/>
    <property type="match status" value="1"/>
</dbReference>
<dbReference type="Pfam" id="PF00089">
    <property type="entry name" value="Trypsin"/>
    <property type="match status" value="1"/>
</dbReference>
<dbReference type="PRINTS" id="PR00722">
    <property type="entry name" value="CHYMOTRYPSIN"/>
</dbReference>
<dbReference type="SMART" id="SM00020">
    <property type="entry name" value="Tryp_SPc"/>
    <property type="match status" value="1"/>
</dbReference>
<dbReference type="SUPFAM" id="SSF50494">
    <property type="entry name" value="Trypsin-like serine proteases"/>
    <property type="match status" value="1"/>
</dbReference>
<dbReference type="PROSITE" id="PS50240">
    <property type="entry name" value="TRYPSIN_DOM"/>
    <property type="match status" value="1"/>
</dbReference>
<dbReference type="PROSITE" id="PS00134">
    <property type="entry name" value="TRYPSIN_HIS"/>
    <property type="match status" value="1"/>
</dbReference>
<dbReference type="PROSITE" id="PS00135">
    <property type="entry name" value="TRYPSIN_SER"/>
    <property type="match status" value="1"/>
</dbReference>
<name>KLK7_HUMAN</name>
<accession>P49862</accession>
<accession>A8K0U5</accession>
<accession>Q8N5N9</accession>
<accession>Q8NFV7</accession>
<sequence length="253" mass="27525">MARSLLLPLQILLLSLALETAGEEAQGDKIIDGAPCARGSHPWQVALLSGNQLHCGGVLVNERWVLTAAHCKMNEYTVHLGSDTLGDRRAQRIKASKSFRHPGYSTQTHVNDLMLVKLNSQARLSSMVKKVRLPSRCEPPGTTCTVSGWGTTTSPDVTFPSDLMCVDVKLISPQDCTKVYKDLLENSMLCAGIPDSKKNACNGDSGGPLVCRGTLQGLVSWGTFPCGQPNDPGVYTQVCKFTKWINDTMKKHR</sequence>
<evidence type="ECO:0000255" key="1"/>
<evidence type="ECO:0000255" key="2">
    <source>
        <dbReference type="PROSITE-ProRule" id="PRU00274"/>
    </source>
</evidence>
<evidence type="ECO:0000269" key="3">
    <source>
    </source>
</evidence>
<evidence type="ECO:0000269" key="4">
    <source>
    </source>
</evidence>
<evidence type="ECO:0000269" key="5">
    <source>
    </source>
</evidence>
<evidence type="ECO:0000269" key="6">
    <source>
    </source>
</evidence>
<evidence type="ECO:0000269" key="7">
    <source>
    </source>
</evidence>
<evidence type="ECO:0000303" key="8">
    <source>
    </source>
</evidence>
<evidence type="ECO:0000305" key="9"/>
<evidence type="ECO:0007829" key="10">
    <source>
        <dbReference type="PDB" id="2QXI"/>
    </source>
</evidence>
<evidence type="ECO:0007829" key="11">
    <source>
        <dbReference type="PDB" id="6SJU"/>
    </source>
</evidence>
<protein>
    <recommendedName>
        <fullName>Kallikrein-7</fullName>
        <shortName>hK7</shortName>
        <ecNumber>3.4.21.117</ecNumber>
    </recommendedName>
    <alternativeName>
        <fullName>Serine protease 6</fullName>
    </alternativeName>
    <alternativeName>
        <fullName>Stratum corneum chymotryptic enzyme</fullName>
        <shortName>hSCCE</shortName>
    </alternativeName>
</protein>
<feature type="signal peptide" evidence="7">
    <location>
        <begin position="1"/>
        <end position="22"/>
    </location>
</feature>
<feature type="propeptide" id="PRO_0000027942" description="Activation peptide">
    <location>
        <begin position="23"/>
        <end position="29"/>
    </location>
</feature>
<feature type="chain" id="PRO_0000027943" description="Kallikrein-7">
    <location>
        <begin position="30"/>
        <end position="253"/>
    </location>
</feature>
<feature type="domain" description="Peptidase S1" evidence="2">
    <location>
        <begin position="30"/>
        <end position="250"/>
    </location>
</feature>
<feature type="active site" description="Charge relay system" evidence="5">
    <location>
        <position position="70"/>
    </location>
</feature>
<feature type="active site" description="Charge relay system" evidence="5">
    <location>
        <position position="112"/>
    </location>
</feature>
<feature type="active site" description="Charge relay system" evidence="5">
    <location>
        <position position="205"/>
    </location>
</feature>
<feature type="site" description="Major binding site for inhibitory zinc or copper">
    <location>
        <position position="109"/>
    </location>
</feature>
<feature type="glycosylation site" description="N-linked (GlcNAc...) asparagine" evidence="1">
    <location>
        <position position="246"/>
    </location>
</feature>
<feature type="disulfide bond">
    <location>
        <begin position="36"/>
        <end position="165"/>
    </location>
</feature>
<feature type="disulfide bond">
    <location>
        <begin position="55"/>
        <end position="71"/>
    </location>
</feature>
<feature type="disulfide bond">
    <location>
        <begin position="137"/>
        <end position="239"/>
    </location>
</feature>
<feature type="disulfide bond">
    <location>
        <begin position="144"/>
        <end position="211"/>
    </location>
</feature>
<feature type="disulfide bond">
    <location>
        <begin position="176"/>
        <end position="190"/>
    </location>
</feature>
<feature type="disulfide bond">
    <location>
        <begin position="201"/>
        <end position="226"/>
    </location>
</feature>
<feature type="splice variant" id="VSP_013581" description="In isoform 2." evidence="8">
    <location>
        <begin position="1"/>
        <end position="72"/>
    </location>
</feature>
<feature type="mutagenesis site" description="No effect on zinc inhibition." evidence="5">
    <original>H</original>
    <variation>F</variation>
    <location>
        <position position="54"/>
    </location>
</feature>
<feature type="mutagenesis site" description="No zinc inhibition." evidence="5">
    <original>H</original>
    <variation>A</variation>
    <location>
        <position position="109"/>
    </location>
</feature>
<feature type="sequence conflict" description="In Ref. 9; AAH32005." evidence="9" ref="9">
    <original>C</original>
    <variation>W</variation>
    <location>
        <position position="226"/>
    </location>
</feature>
<feature type="strand" evidence="10">
    <location>
        <begin position="44"/>
        <end position="49"/>
    </location>
</feature>
<feature type="strand" evidence="10">
    <location>
        <begin position="52"/>
        <end position="61"/>
    </location>
</feature>
<feature type="strand" evidence="10">
    <location>
        <begin position="64"/>
        <end position="67"/>
    </location>
</feature>
<feature type="helix" evidence="10">
    <location>
        <begin position="69"/>
        <end position="71"/>
    </location>
</feature>
<feature type="strand" evidence="10">
    <location>
        <begin position="76"/>
        <end position="81"/>
    </location>
</feature>
<feature type="strand" evidence="10">
    <location>
        <begin position="90"/>
        <end position="95"/>
    </location>
</feature>
<feature type="strand" evidence="10">
    <location>
        <begin position="97"/>
        <end position="100"/>
    </location>
</feature>
<feature type="turn" evidence="10">
    <location>
        <begin position="106"/>
        <end position="108"/>
    </location>
</feature>
<feature type="strand" evidence="10">
    <location>
        <begin position="114"/>
        <end position="117"/>
    </location>
</feature>
<feature type="strand" evidence="11">
    <location>
        <begin position="125"/>
        <end position="127"/>
    </location>
</feature>
<feature type="strand" evidence="10">
    <location>
        <begin position="143"/>
        <end position="150"/>
    </location>
</feature>
<feature type="strand" evidence="10">
    <location>
        <begin position="152"/>
        <end position="156"/>
    </location>
</feature>
<feature type="strand" evidence="10">
    <location>
        <begin position="164"/>
        <end position="171"/>
    </location>
</feature>
<feature type="helix" evidence="10">
    <location>
        <begin position="173"/>
        <end position="180"/>
    </location>
</feature>
<feature type="helix" evidence="10">
    <location>
        <begin position="181"/>
        <end position="183"/>
    </location>
</feature>
<feature type="strand" evidence="10">
    <location>
        <begin position="188"/>
        <end position="192"/>
    </location>
</feature>
<feature type="strand" evidence="10">
    <location>
        <begin position="208"/>
        <end position="211"/>
    </location>
</feature>
<feature type="strand" evidence="10">
    <location>
        <begin position="214"/>
        <end position="221"/>
    </location>
</feature>
<feature type="strand" evidence="10">
    <location>
        <begin position="224"/>
        <end position="226"/>
    </location>
</feature>
<feature type="strand" evidence="10">
    <location>
        <begin position="233"/>
        <end position="237"/>
    </location>
</feature>
<feature type="helix" evidence="10">
    <location>
        <begin position="238"/>
        <end position="240"/>
    </location>
</feature>
<feature type="helix" evidence="10">
    <location>
        <begin position="242"/>
        <end position="251"/>
    </location>
</feature>
<reference key="1">
    <citation type="journal article" date="1994" name="J. Biol. Chem.">
        <title>Cloning, expression, and characterization of stratum corneum chymotryptic enzyme. A skin-specific human serine proteinase.</title>
        <authorList>
            <person name="Hansson L."/>
            <person name="Stroemqvist M."/>
            <person name="Baeckman A."/>
            <person name="Wallbrandt P."/>
            <person name="Carlstein A."/>
            <person name="Egelrud T."/>
        </authorList>
    </citation>
    <scope>NUCLEOTIDE SEQUENCE [MRNA] (ISOFORM 1)</scope>
    <scope>PROTEIN SEQUENCE OF 23-53</scope>
    <source>
        <tissue>Skin</tissue>
    </source>
</reference>
<reference key="2">
    <citation type="journal article" date="2000" name="Gene">
        <title>The KLK7 (PRSS6) gene, encoding for the stratum corneum chymotryptic enzyme is a new member of the human kallikrein gene family -- genomic characterization, mapping, tissue expression and hormonal regulation.</title>
        <authorList>
            <person name="Yousef G.M."/>
            <person name="Scorilas A."/>
            <person name="Magklara A."/>
            <person name="Soosaipillai A."/>
            <person name="Diamandis E.P."/>
        </authorList>
    </citation>
    <scope>NUCLEOTIDE SEQUENCE [GENOMIC DNA]</scope>
    <scope>TISSUE SPECIFICITY</scope>
    <scope>INDUCTION</scope>
    <source>
        <tissue>Keratinocyte</tissue>
    </source>
</reference>
<reference key="3">
    <citation type="journal article" date="2000" name="Gene">
        <title>Sequencing and expression analysis of the serine protease gene cluster located in chromosome 19q13 region.</title>
        <authorList>
            <person name="Gan L."/>
            <person name="Lee I."/>
            <person name="Smith R."/>
            <person name="Argonza-Barrett R."/>
            <person name="Lei H."/>
            <person name="McCuaig J."/>
            <person name="Moss P."/>
            <person name="Paeper B."/>
            <person name="Wang K."/>
        </authorList>
    </citation>
    <scope>NUCLEOTIDE SEQUENCE [GENOMIC DNA]</scope>
</reference>
<reference key="4">
    <citation type="journal article" date="2002" name="J. Invest. Dermatol.">
        <title>Epidermal overexpression of stratum corneum chymotryptic enzyme in mice: a model for chronic itchy dermatitis.</title>
        <authorList>
            <person name="Hansson L."/>
            <person name="Backman A."/>
            <person name="Ny A."/>
            <person name="Edlund M."/>
            <person name="Ekholm E."/>
            <person name="Ekstrand Hammarstrom B."/>
            <person name="Tornell J."/>
            <person name="Wallbrandt P."/>
            <person name="Wennbo H."/>
            <person name="Egelrud T."/>
        </authorList>
    </citation>
    <scope>NUCLEOTIDE SEQUENCE [GENOMIC DNA]</scope>
</reference>
<reference key="5">
    <citation type="journal article" date="2003" name="Clin. Cancer Res.">
        <title>Differential splicing of KLK5 and KLK7 in epithelial ovarian cancer produces novel variants with potential as cancer biomarkers.</title>
        <authorList>
            <person name="Dong Y."/>
            <person name="Kaushal A."/>
            <person name="Brattsand M."/>
            <person name="Nicklin J."/>
            <person name="Clements J.A."/>
        </authorList>
    </citation>
    <scope>NUCLEOTIDE SEQUENCE [MRNA] (ISOFORMS 1 AND 2)</scope>
    <scope>SUBCELLULAR LOCATION</scope>
    <scope>TISSUE SPECIFICITY</scope>
    <source>
        <tissue>Ovarian carcinoma</tissue>
    </source>
</reference>
<reference key="6">
    <citation type="submission" date="2004-04" db="EMBL/GenBank/DDBJ databases">
        <title>Prostate epithelial cells KLK7 protein.</title>
        <authorList>
            <person name="Mo Z."/>
            <person name="Yang X."/>
        </authorList>
    </citation>
    <scope>NUCLEOTIDE SEQUENCE [MRNA]</scope>
    <source>
        <tissue>Prostate</tissue>
    </source>
</reference>
<reference key="7">
    <citation type="journal article" date="2004" name="Nat. Genet.">
        <title>Complete sequencing and characterization of 21,243 full-length human cDNAs.</title>
        <authorList>
            <person name="Ota T."/>
            <person name="Suzuki Y."/>
            <person name="Nishikawa T."/>
            <person name="Otsuki T."/>
            <person name="Sugiyama T."/>
            <person name="Irie R."/>
            <person name="Wakamatsu A."/>
            <person name="Hayashi K."/>
            <person name="Sato H."/>
            <person name="Nagai K."/>
            <person name="Kimura K."/>
            <person name="Makita H."/>
            <person name="Sekine M."/>
            <person name="Obayashi M."/>
            <person name="Nishi T."/>
            <person name="Shibahara T."/>
            <person name="Tanaka T."/>
            <person name="Ishii S."/>
            <person name="Yamamoto J."/>
            <person name="Saito K."/>
            <person name="Kawai Y."/>
            <person name="Isono Y."/>
            <person name="Nakamura Y."/>
            <person name="Nagahari K."/>
            <person name="Murakami K."/>
            <person name="Yasuda T."/>
            <person name="Iwayanagi T."/>
            <person name="Wagatsuma M."/>
            <person name="Shiratori A."/>
            <person name="Sudo H."/>
            <person name="Hosoiri T."/>
            <person name="Kaku Y."/>
            <person name="Kodaira H."/>
            <person name="Kondo H."/>
            <person name="Sugawara M."/>
            <person name="Takahashi M."/>
            <person name="Kanda K."/>
            <person name="Yokoi T."/>
            <person name="Furuya T."/>
            <person name="Kikkawa E."/>
            <person name="Omura Y."/>
            <person name="Abe K."/>
            <person name="Kamihara K."/>
            <person name="Katsuta N."/>
            <person name="Sato K."/>
            <person name="Tanikawa M."/>
            <person name="Yamazaki M."/>
            <person name="Ninomiya K."/>
            <person name="Ishibashi T."/>
            <person name="Yamashita H."/>
            <person name="Murakawa K."/>
            <person name="Fujimori K."/>
            <person name="Tanai H."/>
            <person name="Kimata M."/>
            <person name="Watanabe M."/>
            <person name="Hiraoka S."/>
            <person name="Chiba Y."/>
            <person name="Ishida S."/>
            <person name="Ono Y."/>
            <person name="Takiguchi S."/>
            <person name="Watanabe S."/>
            <person name="Yosida M."/>
            <person name="Hotuta T."/>
            <person name="Kusano J."/>
            <person name="Kanehori K."/>
            <person name="Takahashi-Fujii A."/>
            <person name="Hara H."/>
            <person name="Tanase T.-O."/>
            <person name="Nomura Y."/>
            <person name="Togiya S."/>
            <person name="Komai F."/>
            <person name="Hara R."/>
            <person name="Takeuchi K."/>
            <person name="Arita M."/>
            <person name="Imose N."/>
            <person name="Musashino K."/>
            <person name="Yuuki H."/>
            <person name="Oshima A."/>
            <person name="Sasaki N."/>
            <person name="Aotsuka S."/>
            <person name="Yoshikawa Y."/>
            <person name="Matsunawa H."/>
            <person name="Ichihara T."/>
            <person name="Shiohata N."/>
            <person name="Sano S."/>
            <person name="Moriya S."/>
            <person name="Momiyama H."/>
            <person name="Satoh N."/>
            <person name="Takami S."/>
            <person name="Terashima Y."/>
            <person name="Suzuki O."/>
            <person name="Nakagawa S."/>
            <person name="Senoh A."/>
            <person name="Mizoguchi H."/>
            <person name="Goto Y."/>
            <person name="Shimizu F."/>
            <person name="Wakebe H."/>
            <person name="Hishigaki H."/>
            <person name="Watanabe T."/>
            <person name="Sugiyama A."/>
            <person name="Takemoto M."/>
            <person name="Kawakami B."/>
            <person name="Yamazaki M."/>
            <person name="Watanabe K."/>
            <person name="Kumagai A."/>
            <person name="Itakura S."/>
            <person name="Fukuzumi Y."/>
            <person name="Fujimori Y."/>
            <person name="Komiyama M."/>
            <person name="Tashiro H."/>
            <person name="Tanigami A."/>
            <person name="Fujiwara T."/>
            <person name="Ono T."/>
            <person name="Yamada K."/>
            <person name="Fujii Y."/>
            <person name="Ozaki K."/>
            <person name="Hirao M."/>
            <person name="Ohmori Y."/>
            <person name="Kawabata A."/>
            <person name="Hikiji T."/>
            <person name="Kobatake N."/>
            <person name="Inagaki H."/>
            <person name="Ikema Y."/>
            <person name="Okamoto S."/>
            <person name="Okitani R."/>
            <person name="Kawakami T."/>
            <person name="Noguchi S."/>
            <person name="Itoh T."/>
            <person name="Shigeta K."/>
            <person name="Senba T."/>
            <person name="Matsumura K."/>
            <person name="Nakajima Y."/>
            <person name="Mizuno T."/>
            <person name="Morinaga M."/>
            <person name="Sasaki M."/>
            <person name="Togashi T."/>
            <person name="Oyama M."/>
            <person name="Hata H."/>
            <person name="Watanabe M."/>
            <person name="Komatsu T."/>
            <person name="Mizushima-Sugano J."/>
            <person name="Satoh T."/>
            <person name="Shirai Y."/>
            <person name="Takahashi Y."/>
            <person name="Nakagawa K."/>
            <person name="Okumura K."/>
            <person name="Nagase T."/>
            <person name="Nomura N."/>
            <person name="Kikuchi H."/>
            <person name="Masuho Y."/>
            <person name="Yamashita R."/>
            <person name="Nakai K."/>
            <person name="Yada T."/>
            <person name="Nakamura Y."/>
            <person name="Ohara O."/>
            <person name="Isogai T."/>
            <person name="Sugano S."/>
        </authorList>
    </citation>
    <scope>NUCLEOTIDE SEQUENCE [LARGE SCALE MRNA]</scope>
    <source>
        <tissue>Amygdala</tissue>
    </source>
</reference>
<reference key="8">
    <citation type="submission" date="2005-07" db="EMBL/GenBank/DDBJ databases">
        <authorList>
            <person name="Mural R.J."/>
            <person name="Istrail S."/>
            <person name="Sutton G."/>
            <person name="Florea L."/>
            <person name="Halpern A.L."/>
            <person name="Mobarry C.M."/>
            <person name="Lippert R."/>
            <person name="Walenz B."/>
            <person name="Shatkay H."/>
            <person name="Dew I."/>
            <person name="Miller J.R."/>
            <person name="Flanigan M.J."/>
            <person name="Edwards N.J."/>
            <person name="Bolanos R."/>
            <person name="Fasulo D."/>
            <person name="Halldorsson B.V."/>
            <person name="Hannenhalli S."/>
            <person name="Turner R."/>
            <person name="Yooseph S."/>
            <person name="Lu F."/>
            <person name="Nusskern D.R."/>
            <person name="Shue B.C."/>
            <person name="Zheng X.H."/>
            <person name="Zhong F."/>
            <person name="Delcher A.L."/>
            <person name="Huson D.H."/>
            <person name="Kravitz S.A."/>
            <person name="Mouchard L."/>
            <person name="Reinert K."/>
            <person name="Remington K.A."/>
            <person name="Clark A.G."/>
            <person name="Waterman M.S."/>
            <person name="Eichler E.E."/>
            <person name="Adams M.D."/>
            <person name="Hunkapiller M.W."/>
            <person name="Myers E.W."/>
            <person name="Venter J.C."/>
        </authorList>
    </citation>
    <scope>NUCLEOTIDE SEQUENCE [LARGE SCALE GENOMIC DNA]</scope>
</reference>
<reference key="9">
    <citation type="journal article" date="2004" name="Genome Res.">
        <title>The status, quality, and expansion of the NIH full-length cDNA project: the Mammalian Gene Collection (MGC).</title>
        <authorList>
            <consortium name="The MGC Project Team"/>
        </authorList>
    </citation>
    <scope>NUCLEOTIDE SEQUENCE [LARGE SCALE MRNA] (ISOFORM 1)</scope>
    <source>
        <tissue>Skin</tissue>
    </source>
</reference>
<reference key="10">
    <citation type="journal article" date="1995" name="Biochem. Biophys. Res. Commun.">
        <title>Primary substrate specificity of recombinant human stratum corneum chymotryptic enzyme.</title>
        <authorList>
            <person name="Skytt A."/>
            <person name="Stroemqvist M."/>
            <person name="Egelrud T."/>
        </authorList>
    </citation>
    <scope>CHARACTERIZATION</scope>
</reference>
<reference key="11">
    <citation type="journal article" date="2013" name="Cell. Mol. Life Sci.">
        <title>Vaspin inhibits kallikrein 7 by serpin mechanism.</title>
        <authorList>
            <person name="Heiker J.T."/>
            <person name="Kloting N."/>
            <person name="Kovacs P."/>
            <person name="Kuettner E.B."/>
            <person name="Strater N."/>
            <person name="Schultz S."/>
            <person name="Kern M."/>
            <person name="Stumvoll M."/>
            <person name="Bluher M."/>
            <person name="Beck-Sickinger A.G."/>
        </authorList>
    </citation>
    <scope>FUNCTION</scope>
    <scope>CLEAVAGE SPECIFICITY FOR INSULIN</scope>
    <scope>ACTIVITY REGULATION</scope>
</reference>
<reference key="12">
    <citation type="journal article" date="2007" name="Proc. Natl. Acad. Sci. U.S.A.">
        <title>Chymotryptic specificity determinants in the 1.0 A structure of the zinc-inhibited human tissue kallikrein 7.</title>
        <authorList>
            <person name="Debela M."/>
            <person name="Hess P."/>
            <person name="Magdolen V."/>
            <person name="Schechter N.M."/>
            <person name="Steiner T."/>
            <person name="Huber R."/>
            <person name="Bode W."/>
            <person name="Goettig P."/>
        </authorList>
    </citation>
    <scope>X-RAY CRYSTALLOGRAPHY (1.0 ANGSTROMS) OF 30-253 IN COMPLEX WITH ZINC OR COPPER</scope>
    <scope>ACTIVE SITE</scope>
    <scope>DISULFIDE BONDS</scope>
    <scope>MUTAGENESIS OF HIS-54 AND HIS-109</scope>
</reference>
<reference key="13">
    <citation type="journal article" date="2008" name="J. Mol. Biol.">
        <title>Crystal structure of human epidermal kallikrein 7 (hK7) synthesized directly in its native state in E. coli: insights into the atomic basis of its inhibition by LEKTI domain 6 (LD6).</title>
        <authorList>
            <person name="Fernandez I.S."/>
            <person name="Standker L."/>
            <person name="Magert H.J."/>
            <person name="Forssmann W.G."/>
            <person name="Gimenez-Gallego G."/>
            <person name="Romero A."/>
        </authorList>
    </citation>
    <scope>X-RAY CRYSTALLOGRAPHY (2.8 ANGSTROMS) OF 30-250</scope>
    <scope>DISULFIDE BONDS</scope>
</reference>